<reference key="1">
    <citation type="submission" date="2007-03" db="EMBL/GenBank/DDBJ databases">
        <authorList>
            <person name="Heidelberg J."/>
        </authorList>
    </citation>
    <scope>NUCLEOTIDE SEQUENCE [LARGE SCALE GENOMIC DNA]</scope>
    <source>
        <strain>ATCC 39541 / Classical Ogawa 395 / O395</strain>
    </source>
</reference>
<reference key="2">
    <citation type="journal article" date="2008" name="PLoS ONE">
        <title>A recalibrated molecular clock and independent origins for the cholera pandemic clones.</title>
        <authorList>
            <person name="Feng L."/>
            <person name="Reeves P.R."/>
            <person name="Lan R."/>
            <person name="Ren Y."/>
            <person name="Gao C."/>
            <person name="Zhou Z."/>
            <person name="Ren Y."/>
            <person name="Cheng J."/>
            <person name="Wang W."/>
            <person name="Wang J."/>
            <person name="Qian W."/>
            <person name="Li D."/>
            <person name="Wang L."/>
        </authorList>
    </citation>
    <scope>NUCLEOTIDE SEQUENCE [LARGE SCALE GENOMIC DNA]</scope>
    <source>
        <strain>ATCC 39541 / Classical Ogawa 395 / O395</strain>
    </source>
</reference>
<protein>
    <recommendedName>
        <fullName evidence="1">Glucosamine-6-phosphate deaminase</fullName>
        <ecNumber evidence="1">3.5.99.6</ecNumber>
    </recommendedName>
    <alternativeName>
        <fullName evidence="1">GlcN6P deaminase</fullName>
        <shortName evidence="1">GNPDA</shortName>
    </alternativeName>
    <alternativeName>
        <fullName evidence="1">Glucosamine-6-phosphate isomerase</fullName>
    </alternativeName>
</protein>
<organism>
    <name type="scientific">Vibrio cholerae serotype O1 (strain ATCC 39541 / Classical Ogawa 395 / O395)</name>
    <dbReference type="NCBI Taxonomy" id="345073"/>
    <lineage>
        <taxon>Bacteria</taxon>
        <taxon>Pseudomonadati</taxon>
        <taxon>Pseudomonadota</taxon>
        <taxon>Gammaproteobacteria</taxon>
        <taxon>Vibrionales</taxon>
        <taxon>Vibrionaceae</taxon>
        <taxon>Vibrio</taxon>
    </lineage>
</organism>
<evidence type="ECO:0000255" key="1">
    <source>
        <dbReference type="HAMAP-Rule" id="MF_01241"/>
    </source>
</evidence>
<name>NAGB_VIBC3</name>
<gene>
    <name evidence="1" type="primary">nagB</name>
    <name type="ordered locus">VC0395_0216</name>
    <name type="ordered locus">VC395_A1048</name>
</gene>
<keyword id="KW-0021">Allosteric enzyme</keyword>
<keyword id="KW-0119">Carbohydrate metabolism</keyword>
<keyword id="KW-0378">Hydrolase</keyword>
<proteinExistence type="inferred from homology"/>
<feature type="chain" id="PRO_1000073174" description="Glucosamine-6-phosphate deaminase">
    <location>
        <begin position="1"/>
        <end position="266"/>
    </location>
</feature>
<feature type="active site" description="Proton acceptor; for enolization step" evidence="1">
    <location>
        <position position="72"/>
    </location>
</feature>
<feature type="active site" description="For ring-opening step" evidence="1">
    <location>
        <position position="141"/>
    </location>
</feature>
<feature type="active site" description="Proton acceptor; for ring-opening step" evidence="1">
    <location>
        <position position="143"/>
    </location>
</feature>
<feature type="active site" description="For ring-opening step" evidence="1">
    <location>
        <position position="148"/>
    </location>
</feature>
<feature type="site" description="Part of the allosteric site" evidence="1">
    <location>
        <position position="151"/>
    </location>
</feature>
<feature type="site" description="Part of the allosteric site" evidence="1">
    <location>
        <position position="158"/>
    </location>
</feature>
<feature type="site" description="Part of the allosteric site" evidence="1">
    <location>
        <position position="160"/>
    </location>
</feature>
<feature type="site" description="Part of the allosteric site" evidence="1">
    <location>
        <position position="161"/>
    </location>
</feature>
<feature type="site" description="Part of the allosteric site" evidence="1">
    <location>
        <position position="254"/>
    </location>
</feature>
<dbReference type="EC" id="3.5.99.6" evidence="1"/>
<dbReference type="EMBL" id="CP000626">
    <property type="protein sequence ID" value="ABQ18754.1"/>
    <property type="molecule type" value="Genomic_DNA"/>
</dbReference>
<dbReference type="EMBL" id="CP001236">
    <property type="protein sequence ID" value="ACP11878.1"/>
    <property type="molecule type" value="Genomic_DNA"/>
</dbReference>
<dbReference type="RefSeq" id="WP_001237050.1">
    <property type="nucleotide sequence ID" value="NZ_JAACZH010000003.1"/>
</dbReference>
<dbReference type="SMR" id="A5F125"/>
<dbReference type="GeneID" id="89512109"/>
<dbReference type="KEGG" id="vco:VC0395_0216"/>
<dbReference type="KEGG" id="vcr:VC395_A1048"/>
<dbReference type="PATRIC" id="fig|345073.21.peg.3771"/>
<dbReference type="eggNOG" id="COG0363">
    <property type="taxonomic scope" value="Bacteria"/>
</dbReference>
<dbReference type="HOGENOM" id="CLU_049611_0_1_6"/>
<dbReference type="OrthoDB" id="9791139at2"/>
<dbReference type="UniPathway" id="UPA00629">
    <property type="reaction ID" value="UER00684"/>
</dbReference>
<dbReference type="Proteomes" id="UP000000249">
    <property type="component" value="Chromosome 1"/>
</dbReference>
<dbReference type="GO" id="GO:0005737">
    <property type="term" value="C:cytoplasm"/>
    <property type="evidence" value="ECO:0007669"/>
    <property type="project" value="TreeGrafter"/>
</dbReference>
<dbReference type="GO" id="GO:0004342">
    <property type="term" value="F:glucosamine-6-phosphate deaminase activity"/>
    <property type="evidence" value="ECO:0007669"/>
    <property type="project" value="UniProtKB-UniRule"/>
</dbReference>
<dbReference type="GO" id="GO:0042802">
    <property type="term" value="F:identical protein binding"/>
    <property type="evidence" value="ECO:0007669"/>
    <property type="project" value="TreeGrafter"/>
</dbReference>
<dbReference type="GO" id="GO:0005975">
    <property type="term" value="P:carbohydrate metabolic process"/>
    <property type="evidence" value="ECO:0007669"/>
    <property type="project" value="InterPro"/>
</dbReference>
<dbReference type="GO" id="GO:0006043">
    <property type="term" value="P:glucosamine catabolic process"/>
    <property type="evidence" value="ECO:0007669"/>
    <property type="project" value="TreeGrafter"/>
</dbReference>
<dbReference type="GO" id="GO:0006046">
    <property type="term" value="P:N-acetylglucosamine catabolic process"/>
    <property type="evidence" value="ECO:0007669"/>
    <property type="project" value="TreeGrafter"/>
</dbReference>
<dbReference type="GO" id="GO:0019262">
    <property type="term" value="P:N-acetylneuraminate catabolic process"/>
    <property type="evidence" value="ECO:0007669"/>
    <property type="project" value="UniProtKB-UniRule"/>
</dbReference>
<dbReference type="CDD" id="cd01399">
    <property type="entry name" value="GlcN6P_deaminase"/>
    <property type="match status" value="1"/>
</dbReference>
<dbReference type="FunFam" id="3.40.50.1360:FF:000002">
    <property type="entry name" value="Glucosamine-6-phosphate deaminase"/>
    <property type="match status" value="1"/>
</dbReference>
<dbReference type="Gene3D" id="3.40.50.1360">
    <property type="match status" value="1"/>
</dbReference>
<dbReference type="HAMAP" id="MF_01241">
    <property type="entry name" value="GlcN6P_deamin"/>
    <property type="match status" value="1"/>
</dbReference>
<dbReference type="InterPro" id="IPR006148">
    <property type="entry name" value="Glc/Gal-6P_isomerase"/>
</dbReference>
<dbReference type="InterPro" id="IPR004547">
    <property type="entry name" value="Glucosamine6P_isomerase"/>
</dbReference>
<dbReference type="InterPro" id="IPR018321">
    <property type="entry name" value="Glucosamine6P_isomerase_CS"/>
</dbReference>
<dbReference type="InterPro" id="IPR037171">
    <property type="entry name" value="NagB/RpiA_transferase-like"/>
</dbReference>
<dbReference type="NCBIfam" id="TIGR00502">
    <property type="entry name" value="nagB"/>
    <property type="match status" value="1"/>
</dbReference>
<dbReference type="NCBIfam" id="NF001685">
    <property type="entry name" value="PRK00443.1-5"/>
    <property type="match status" value="1"/>
</dbReference>
<dbReference type="PANTHER" id="PTHR11280">
    <property type="entry name" value="GLUCOSAMINE-6-PHOSPHATE ISOMERASE"/>
    <property type="match status" value="1"/>
</dbReference>
<dbReference type="PANTHER" id="PTHR11280:SF5">
    <property type="entry name" value="GLUCOSAMINE-6-PHOSPHATE ISOMERASE"/>
    <property type="match status" value="1"/>
</dbReference>
<dbReference type="Pfam" id="PF01182">
    <property type="entry name" value="Glucosamine_iso"/>
    <property type="match status" value="1"/>
</dbReference>
<dbReference type="SUPFAM" id="SSF100950">
    <property type="entry name" value="NagB/RpiA/CoA transferase-like"/>
    <property type="match status" value="1"/>
</dbReference>
<dbReference type="PROSITE" id="PS01161">
    <property type="entry name" value="GLC_GALNAC_ISOMERASE"/>
    <property type="match status" value="1"/>
</dbReference>
<sequence>MRLIPLKAAAQVGKWAAAHIVKRINEFQPTAERPFVLGLPTGGTPLATYKALIEMHKAGEVSFKHVVTFNMDEYVGLAADHPESYRSFMYNNFFNHIDIQEENINLLNGNTDDHEAECKRYEDKIKSYGKINLFMGGVGNDGHIAFNEPASSLSSRTRIKTLTEDTRIANSRFFDGDINQVPKYALTIGVGTLLDAQEIMILVTGHNKALALQAAVEGSVNHLWTVSALQLHPKAVIVCDEPSTQELKVKTVKYFTELEAKNIVGF</sequence>
<accession>A5F125</accession>
<accession>C3M6W5</accession>
<comment type="function">
    <text evidence="1">Catalyzes the reversible isomerization-deamination of glucosamine 6-phosphate (GlcN6P) to form fructose 6-phosphate (Fru6P) and ammonium ion.</text>
</comment>
<comment type="catalytic activity">
    <reaction evidence="1">
        <text>alpha-D-glucosamine 6-phosphate + H2O = beta-D-fructose 6-phosphate + NH4(+)</text>
        <dbReference type="Rhea" id="RHEA:12172"/>
        <dbReference type="ChEBI" id="CHEBI:15377"/>
        <dbReference type="ChEBI" id="CHEBI:28938"/>
        <dbReference type="ChEBI" id="CHEBI:57634"/>
        <dbReference type="ChEBI" id="CHEBI:75989"/>
        <dbReference type="EC" id="3.5.99.6"/>
    </reaction>
</comment>
<comment type="activity regulation">
    <text evidence="1">Allosterically activated by N-acetylglucosamine 6-phosphate (GlcNAc6P).</text>
</comment>
<comment type="pathway">
    <text evidence="1">Amino-sugar metabolism; N-acetylneuraminate degradation; D-fructose 6-phosphate from N-acetylneuraminate: step 5/5.</text>
</comment>
<comment type="subunit">
    <text evidence="1">Homohexamer.</text>
</comment>
<comment type="similarity">
    <text evidence="1">Belongs to the glucosamine/galactosamine-6-phosphate isomerase family. NagB subfamily.</text>
</comment>